<gene>
    <name evidence="1" type="primary">metE</name>
    <name type="ordered locus">Ping_3386</name>
</gene>
<comment type="function">
    <text evidence="1">Catalyzes the transfer of a methyl group from 5-methyltetrahydrofolate to homocysteine resulting in methionine formation.</text>
</comment>
<comment type="catalytic activity">
    <reaction evidence="1">
        <text>5-methyltetrahydropteroyltri-L-glutamate + L-homocysteine = tetrahydropteroyltri-L-glutamate + L-methionine</text>
        <dbReference type="Rhea" id="RHEA:21196"/>
        <dbReference type="ChEBI" id="CHEBI:57844"/>
        <dbReference type="ChEBI" id="CHEBI:58140"/>
        <dbReference type="ChEBI" id="CHEBI:58199"/>
        <dbReference type="ChEBI" id="CHEBI:58207"/>
        <dbReference type="EC" id="2.1.1.14"/>
    </reaction>
</comment>
<comment type="cofactor">
    <cofactor evidence="1">
        <name>Zn(2+)</name>
        <dbReference type="ChEBI" id="CHEBI:29105"/>
    </cofactor>
    <text evidence="1">Binds 1 zinc ion per subunit.</text>
</comment>
<comment type="pathway">
    <text evidence="1">Amino-acid biosynthesis; L-methionine biosynthesis via de novo pathway; L-methionine from L-homocysteine (MetE route): step 1/1.</text>
</comment>
<comment type="similarity">
    <text evidence="1">Belongs to the vitamin-B12 independent methionine synthase family.</text>
</comment>
<name>METE_PSYIN</name>
<accession>A1T007</accession>
<keyword id="KW-0028">Amino-acid biosynthesis</keyword>
<keyword id="KW-0479">Metal-binding</keyword>
<keyword id="KW-0486">Methionine biosynthesis</keyword>
<keyword id="KW-0489">Methyltransferase</keyword>
<keyword id="KW-1185">Reference proteome</keyword>
<keyword id="KW-0677">Repeat</keyword>
<keyword id="KW-0808">Transferase</keyword>
<keyword id="KW-0862">Zinc</keyword>
<dbReference type="EC" id="2.1.1.14" evidence="1"/>
<dbReference type="EMBL" id="CP000510">
    <property type="protein sequence ID" value="ABM05072.1"/>
    <property type="molecule type" value="Genomic_DNA"/>
</dbReference>
<dbReference type="RefSeq" id="WP_011771624.1">
    <property type="nucleotide sequence ID" value="NC_008709.1"/>
</dbReference>
<dbReference type="SMR" id="A1T007"/>
<dbReference type="STRING" id="357804.Ping_3386"/>
<dbReference type="KEGG" id="pin:Ping_3386"/>
<dbReference type="eggNOG" id="COG0620">
    <property type="taxonomic scope" value="Bacteria"/>
</dbReference>
<dbReference type="HOGENOM" id="CLU_013175_0_0_6"/>
<dbReference type="OrthoDB" id="244285at2"/>
<dbReference type="UniPathway" id="UPA00051">
    <property type="reaction ID" value="UER00082"/>
</dbReference>
<dbReference type="Proteomes" id="UP000000639">
    <property type="component" value="Chromosome"/>
</dbReference>
<dbReference type="GO" id="GO:0003871">
    <property type="term" value="F:5-methyltetrahydropteroyltriglutamate-homocysteine S-methyltransferase activity"/>
    <property type="evidence" value="ECO:0007669"/>
    <property type="project" value="UniProtKB-UniRule"/>
</dbReference>
<dbReference type="GO" id="GO:0008270">
    <property type="term" value="F:zinc ion binding"/>
    <property type="evidence" value="ECO:0007669"/>
    <property type="project" value="InterPro"/>
</dbReference>
<dbReference type="GO" id="GO:0009086">
    <property type="term" value="P:methionine biosynthetic process"/>
    <property type="evidence" value="ECO:0007669"/>
    <property type="project" value="UniProtKB-UniRule"/>
</dbReference>
<dbReference type="GO" id="GO:0032259">
    <property type="term" value="P:methylation"/>
    <property type="evidence" value="ECO:0007669"/>
    <property type="project" value="UniProtKB-KW"/>
</dbReference>
<dbReference type="CDD" id="cd03311">
    <property type="entry name" value="CIMS_C_terminal_like"/>
    <property type="match status" value="1"/>
</dbReference>
<dbReference type="CDD" id="cd03312">
    <property type="entry name" value="CIMS_N_terminal_like"/>
    <property type="match status" value="1"/>
</dbReference>
<dbReference type="FunFam" id="3.20.20.210:FF:000002">
    <property type="entry name" value="5-methyltetrahydropteroyltriglutamate--homocysteine methyltransferase"/>
    <property type="match status" value="1"/>
</dbReference>
<dbReference type="Gene3D" id="3.20.20.210">
    <property type="match status" value="2"/>
</dbReference>
<dbReference type="HAMAP" id="MF_00172">
    <property type="entry name" value="Meth_synth"/>
    <property type="match status" value="1"/>
</dbReference>
<dbReference type="InterPro" id="IPR013215">
    <property type="entry name" value="Cbl-indep_Met_Synth_N"/>
</dbReference>
<dbReference type="InterPro" id="IPR006276">
    <property type="entry name" value="Cobalamin-indep_Met_synthase"/>
</dbReference>
<dbReference type="InterPro" id="IPR002629">
    <property type="entry name" value="Met_Synth_C/arc"/>
</dbReference>
<dbReference type="InterPro" id="IPR038071">
    <property type="entry name" value="UROD/MetE-like_sf"/>
</dbReference>
<dbReference type="NCBIfam" id="TIGR01371">
    <property type="entry name" value="met_syn_B12ind"/>
    <property type="match status" value="1"/>
</dbReference>
<dbReference type="NCBIfam" id="NF003556">
    <property type="entry name" value="PRK05222.1"/>
    <property type="match status" value="1"/>
</dbReference>
<dbReference type="PANTHER" id="PTHR30519">
    <property type="entry name" value="5-METHYLTETRAHYDROPTEROYLTRIGLUTAMATE--HOMOCYSTEINE METHYLTRANSFERASE"/>
    <property type="match status" value="1"/>
</dbReference>
<dbReference type="Pfam" id="PF08267">
    <property type="entry name" value="Meth_synt_1"/>
    <property type="match status" value="1"/>
</dbReference>
<dbReference type="Pfam" id="PF01717">
    <property type="entry name" value="Meth_synt_2"/>
    <property type="match status" value="1"/>
</dbReference>
<dbReference type="PIRSF" id="PIRSF000382">
    <property type="entry name" value="MeTrfase_B12_ind"/>
    <property type="match status" value="1"/>
</dbReference>
<dbReference type="SUPFAM" id="SSF51726">
    <property type="entry name" value="UROD/MetE-like"/>
    <property type="match status" value="2"/>
</dbReference>
<feature type="chain" id="PRO_1000017267" description="5-methyltetrahydropteroyltriglutamate--homocysteine methyltransferase">
    <location>
        <begin position="1"/>
        <end position="767"/>
    </location>
</feature>
<feature type="active site" description="Proton donor" evidence="1">
    <location>
        <position position="708"/>
    </location>
</feature>
<feature type="binding site" evidence="1">
    <location>
        <position position="126"/>
    </location>
    <ligand>
        <name>5-methyltetrahydropteroyltri-L-glutamate</name>
        <dbReference type="ChEBI" id="CHEBI:58207"/>
    </ligand>
</feature>
<feature type="binding site" evidence="1">
    <location>
        <begin position="445"/>
        <end position="447"/>
    </location>
    <ligand>
        <name>L-homocysteine</name>
        <dbReference type="ChEBI" id="CHEBI:58199"/>
    </ligand>
</feature>
<feature type="binding site" evidence="1">
    <location>
        <begin position="445"/>
        <end position="447"/>
    </location>
    <ligand>
        <name>L-methionine</name>
        <dbReference type="ChEBI" id="CHEBI:57844"/>
    </ligand>
</feature>
<feature type="binding site" evidence="1">
    <location>
        <position position="498"/>
    </location>
    <ligand>
        <name>L-homocysteine</name>
        <dbReference type="ChEBI" id="CHEBI:58199"/>
    </ligand>
</feature>
<feature type="binding site" evidence="1">
    <location>
        <position position="498"/>
    </location>
    <ligand>
        <name>L-methionine</name>
        <dbReference type="ChEBI" id="CHEBI:57844"/>
    </ligand>
</feature>
<feature type="binding site" evidence="1">
    <location>
        <begin position="529"/>
        <end position="530"/>
    </location>
    <ligand>
        <name>5-methyltetrahydropteroyltri-L-glutamate</name>
        <dbReference type="ChEBI" id="CHEBI:58207"/>
    </ligand>
</feature>
<feature type="binding site" evidence="1">
    <location>
        <position position="575"/>
    </location>
    <ligand>
        <name>5-methyltetrahydropteroyltri-L-glutamate</name>
        <dbReference type="ChEBI" id="CHEBI:58207"/>
    </ligand>
</feature>
<feature type="binding site" evidence="1">
    <location>
        <position position="613"/>
    </location>
    <ligand>
        <name>L-homocysteine</name>
        <dbReference type="ChEBI" id="CHEBI:58199"/>
    </ligand>
</feature>
<feature type="binding site" evidence="1">
    <location>
        <position position="613"/>
    </location>
    <ligand>
        <name>L-methionine</name>
        <dbReference type="ChEBI" id="CHEBI:57844"/>
    </ligand>
</feature>
<feature type="binding site" evidence="1">
    <location>
        <position position="619"/>
    </location>
    <ligand>
        <name>5-methyltetrahydropteroyltri-L-glutamate</name>
        <dbReference type="ChEBI" id="CHEBI:58207"/>
    </ligand>
</feature>
<feature type="binding site" evidence="1">
    <location>
        <position position="655"/>
    </location>
    <ligand>
        <name>Zn(2+)</name>
        <dbReference type="ChEBI" id="CHEBI:29105"/>
        <note>catalytic</note>
    </ligand>
</feature>
<feature type="binding site" evidence="1">
    <location>
        <position position="657"/>
    </location>
    <ligand>
        <name>Zn(2+)</name>
        <dbReference type="ChEBI" id="CHEBI:29105"/>
        <note>catalytic</note>
    </ligand>
</feature>
<feature type="binding site" evidence="1">
    <location>
        <position position="679"/>
    </location>
    <ligand>
        <name>Zn(2+)</name>
        <dbReference type="ChEBI" id="CHEBI:29105"/>
        <note>catalytic</note>
    </ligand>
</feature>
<feature type="binding site" evidence="1">
    <location>
        <position position="740"/>
    </location>
    <ligand>
        <name>Zn(2+)</name>
        <dbReference type="ChEBI" id="CHEBI:29105"/>
        <note>catalytic</note>
    </ligand>
</feature>
<sequence>MAKLHHLGFPRIGNKRQLKFALEKFWGGELSEQQLQTSAADLRQQNWLDQQDLALDLYTVGDFSLYDQVLDMSFLVGNIPSRAKQSEQDNSLDNYFRVARGRSQPQECCAASHGQSGESQAGEMTKWFNTNYHYIVPEFDAQTTFLLNAKQLLLQIEALQKINKNVKPVIIGPVTYLWLGKEKDNSQKLTLLPELLEVYAELLALFAEKNITWVQIDEPILVLEIPKQWQEALQSSYQKLGQSKVKLLLTTYFGELKNNLKLACELPIAGLHLDAVNAPHEIDSAIDYLGTDKILSLGIINACNIWKTDLNQTLNQLLPIHQKLQDRLWLAPSSSLLHVPIDLNNEDKLDYEVKSWLAFAVQKLQELSLIGRALNDGLSSVEAAFTYNKLCIENRRQSPQVHKQDIKSKVLNITPELGQRNLAIKQREALQQSYLNLPSYPTTTIGSFPQTSDIRQLRQAKRLGDINEEQYKKSIKESIEFCINEQDQLGLDVLVHGEAERNDMVEYFGELLDGFVFTQFAWVQSYGSRCVKPPILFGDVSRPKAMTVEWSSYAQSLTEKKVKGMLTGPVTILNWSFVRDDQPLQTTCMQIALAIREEVLDLEKAGINIIQIDEAALREKLPLHRSQWQQYLNWAIAAFRLCANGVNDKTQIHTHMCYSEFNDIIAAIAQMDADVITIETSRSDMVLLDVFEAFSYPNGIGPGVYDIHSPNIPDVEQMVSLMKKAALRIPAEQLWVNPDCGLKTRRWEEVKPALLNMVAAAKKLRAS</sequence>
<reference key="1">
    <citation type="journal article" date="2008" name="BMC Genomics">
        <title>Genomics of an extreme psychrophile, Psychromonas ingrahamii.</title>
        <authorList>
            <person name="Riley M."/>
            <person name="Staley J.T."/>
            <person name="Danchin A."/>
            <person name="Wang T.Z."/>
            <person name="Brettin T.S."/>
            <person name="Hauser L.J."/>
            <person name="Land M.L."/>
            <person name="Thompson L.S."/>
        </authorList>
    </citation>
    <scope>NUCLEOTIDE SEQUENCE [LARGE SCALE GENOMIC DNA]</scope>
    <source>
        <strain>DSM 17664 / CCUG 51855 / 37</strain>
    </source>
</reference>
<organism>
    <name type="scientific">Psychromonas ingrahamii (strain DSM 17664 / CCUG 51855 / 37)</name>
    <dbReference type="NCBI Taxonomy" id="357804"/>
    <lineage>
        <taxon>Bacteria</taxon>
        <taxon>Pseudomonadati</taxon>
        <taxon>Pseudomonadota</taxon>
        <taxon>Gammaproteobacteria</taxon>
        <taxon>Alteromonadales</taxon>
        <taxon>Psychromonadaceae</taxon>
        <taxon>Psychromonas</taxon>
    </lineage>
</organism>
<proteinExistence type="inferred from homology"/>
<protein>
    <recommendedName>
        <fullName evidence="1">5-methyltetrahydropteroyltriglutamate--homocysteine methyltransferase</fullName>
        <ecNumber evidence="1">2.1.1.14</ecNumber>
    </recommendedName>
    <alternativeName>
        <fullName evidence="1">Cobalamin-independent methionine synthase</fullName>
    </alternativeName>
    <alternativeName>
        <fullName evidence="1">Methionine synthase, vitamin-B12 independent isozyme</fullName>
    </alternativeName>
</protein>
<evidence type="ECO:0000255" key="1">
    <source>
        <dbReference type="HAMAP-Rule" id="MF_00172"/>
    </source>
</evidence>